<protein>
    <recommendedName>
        <fullName>Rho GTPase-activating protein 32</fullName>
    </recommendedName>
    <alternativeName>
        <fullName>Brain-specific Rho GTPase-activating protein</fullName>
    </alternativeName>
    <alternativeName>
        <fullName>GAB-associated Cdc42/Rac GTPase-activating protein</fullName>
    </alternativeName>
    <alternativeName>
        <fullName>GC-GAP</fullName>
    </alternativeName>
    <alternativeName>
        <fullName>Rho-type GTPase-activating protein 32</fullName>
    </alternativeName>
    <alternativeName>
        <fullName>Rho/Cdc42/Rac GTPase-activating protein RICS</fullName>
    </alternativeName>
    <alternativeName>
        <fullName>RhoGAP involved in the beta-catenin-N-cadherin and NMDA receptor signaling</fullName>
    </alternativeName>
    <alternativeName>
        <fullName>p200RhoGAP</fullName>
    </alternativeName>
    <alternativeName>
        <fullName>p250GAP</fullName>
    </alternativeName>
</protein>
<accession>Q811P8</accession>
<accession>B9EHJ8</accession>
<accession>Q6A010</accession>
<proteinExistence type="evidence at protein level"/>
<feature type="chain" id="PRO_0000345204" description="Rho GTPase-activating protein 32">
    <location>
        <begin position="1"/>
        <end position="2089"/>
    </location>
</feature>
<feature type="domain" description="PX; atypical">
    <location>
        <begin position="131"/>
        <end position="245"/>
    </location>
</feature>
<feature type="domain" description="SH3" evidence="4">
    <location>
        <begin position="259"/>
        <end position="321"/>
    </location>
</feature>
<feature type="domain" description="Rho-GAP" evidence="3">
    <location>
        <begin position="372"/>
        <end position="567"/>
    </location>
</feature>
<feature type="region of interest" description="Disordered" evidence="5">
    <location>
        <begin position="24"/>
        <end position="52"/>
    </location>
</feature>
<feature type="region of interest" description="Disordered" evidence="5">
    <location>
        <begin position="828"/>
        <end position="858"/>
    </location>
</feature>
<feature type="region of interest" description="Disordered" evidence="5">
    <location>
        <begin position="955"/>
        <end position="1037"/>
    </location>
</feature>
<feature type="region of interest" description="Disordered" evidence="5">
    <location>
        <begin position="1119"/>
        <end position="1141"/>
    </location>
</feature>
<feature type="region of interest" description="Disordered" evidence="5">
    <location>
        <begin position="1154"/>
        <end position="1197"/>
    </location>
</feature>
<feature type="region of interest" description="Disordered" evidence="5">
    <location>
        <begin position="1221"/>
        <end position="1368"/>
    </location>
</feature>
<feature type="region of interest" description="Interaction with GAB2" evidence="1">
    <location>
        <begin position="1395"/>
        <end position="1714"/>
    </location>
</feature>
<feature type="region of interest" description="Interaction with FYN" evidence="1">
    <location>
        <begin position="1688"/>
        <end position="2089"/>
    </location>
</feature>
<feature type="region of interest" description="Disordered" evidence="5">
    <location>
        <begin position="1801"/>
        <end position="1865"/>
    </location>
</feature>
<feature type="region of interest" description="Disordered" evidence="5">
    <location>
        <begin position="1881"/>
        <end position="2002"/>
    </location>
</feature>
<feature type="compositionally biased region" description="Basic and acidic residues" evidence="5">
    <location>
        <begin position="828"/>
        <end position="837"/>
    </location>
</feature>
<feature type="compositionally biased region" description="Polar residues" evidence="5">
    <location>
        <begin position="840"/>
        <end position="854"/>
    </location>
</feature>
<feature type="compositionally biased region" description="Polar residues" evidence="5">
    <location>
        <begin position="998"/>
        <end position="1014"/>
    </location>
</feature>
<feature type="compositionally biased region" description="Polar residues" evidence="5">
    <location>
        <begin position="1132"/>
        <end position="1141"/>
    </location>
</feature>
<feature type="compositionally biased region" description="Basic and acidic residues" evidence="5">
    <location>
        <begin position="1175"/>
        <end position="1191"/>
    </location>
</feature>
<feature type="compositionally biased region" description="Basic and acidic residues" evidence="5">
    <location>
        <begin position="1225"/>
        <end position="1235"/>
    </location>
</feature>
<feature type="compositionally biased region" description="Low complexity" evidence="5">
    <location>
        <begin position="1262"/>
        <end position="1275"/>
    </location>
</feature>
<feature type="compositionally biased region" description="Basic and acidic residues" evidence="5">
    <location>
        <begin position="1826"/>
        <end position="1841"/>
    </location>
</feature>
<feature type="compositionally biased region" description="Polar residues" evidence="5">
    <location>
        <begin position="1850"/>
        <end position="1865"/>
    </location>
</feature>
<feature type="compositionally biased region" description="Basic and acidic residues" evidence="5">
    <location>
        <begin position="1881"/>
        <end position="1892"/>
    </location>
</feature>
<feature type="compositionally biased region" description="Polar residues" evidence="5">
    <location>
        <begin position="1918"/>
        <end position="1939"/>
    </location>
</feature>
<feature type="compositionally biased region" description="Basic and acidic residues" evidence="5">
    <location>
        <begin position="1940"/>
        <end position="1954"/>
    </location>
</feature>
<feature type="compositionally biased region" description="Basic and acidic residues" evidence="5">
    <location>
        <begin position="1961"/>
        <end position="1975"/>
    </location>
</feature>
<feature type="site" description="Arginine finger; crucial for GTP hydrolysis by stabilizing the transition state" evidence="3">
    <location>
        <position position="407"/>
    </location>
</feature>
<feature type="modified residue" description="Phosphoserine" evidence="2">
    <location>
        <position position="706"/>
    </location>
</feature>
<feature type="modified residue" description="Phosphoserine" evidence="17">
    <location>
        <position position="709"/>
    </location>
</feature>
<feature type="modified residue" description="Phosphoserine" evidence="17">
    <location>
        <position position="732"/>
    </location>
</feature>
<feature type="modified residue" description="Phosphoserine" evidence="17">
    <location>
        <position position="738"/>
    </location>
</feature>
<feature type="modified residue" description="Phosphoserine" evidence="17">
    <location>
        <position position="852"/>
    </location>
</feature>
<feature type="modified residue" description="Phosphoserine" evidence="17">
    <location>
        <position position="856"/>
    </location>
</feature>
<feature type="modified residue" description="Phosphoserine" evidence="2">
    <location>
        <position position="892"/>
    </location>
</feature>
<feature type="modified residue" description="Phosphoserine" evidence="17">
    <location>
        <position position="952"/>
    </location>
</feature>
<feature type="modified residue" description="Phosphoserine" evidence="2">
    <location>
        <position position="1206"/>
    </location>
</feature>
<feature type="modified residue" description="Asymmetric dimethylarginine" evidence="18">
    <location>
        <position position="1526"/>
    </location>
</feature>
<feature type="modified residue" description="Asymmetric dimethylarginine" evidence="18">
    <location>
        <position position="1536"/>
    </location>
</feature>
<feature type="modified residue" description="Phosphoserine" evidence="17">
    <location>
        <position position="1588"/>
    </location>
</feature>
<feature type="modified residue" description="Omega-N-methylarginine" evidence="18">
    <location>
        <position position="2039"/>
    </location>
</feature>
<feature type="splice variant" id="VSP_034937" description="In isoform 2." evidence="14 15">
    <location>
        <begin position="1"/>
        <end position="349"/>
    </location>
</feature>
<feature type="mutagenesis site" description="Does not affect RhoA or CDC42 activity." evidence="11">
    <original>R</original>
    <variation>K</variation>
    <location>
        <position position="58"/>
    </location>
</feature>
<organism>
    <name type="scientific">Mus musculus</name>
    <name type="common">Mouse</name>
    <dbReference type="NCBI Taxonomy" id="10090"/>
    <lineage>
        <taxon>Eukaryota</taxon>
        <taxon>Metazoa</taxon>
        <taxon>Chordata</taxon>
        <taxon>Craniata</taxon>
        <taxon>Vertebrata</taxon>
        <taxon>Euteleostomi</taxon>
        <taxon>Mammalia</taxon>
        <taxon>Eutheria</taxon>
        <taxon>Euarchontoglires</taxon>
        <taxon>Glires</taxon>
        <taxon>Rodentia</taxon>
        <taxon>Myomorpha</taxon>
        <taxon>Muroidea</taxon>
        <taxon>Muridae</taxon>
        <taxon>Murinae</taxon>
        <taxon>Mus</taxon>
        <taxon>Mus</taxon>
    </lineage>
</organism>
<dbReference type="EMBL" id="AY194286">
    <property type="protein sequence ID" value="AAO43676.1"/>
    <property type="molecule type" value="mRNA"/>
</dbReference>
<dbReference type="EMBL" id="AC134607">
    <property type="status" value="NOT_ANNOTATED_CDS"/>
    <property type="molecule type" value="Genomic_DNA"/>
</dbReference>
<dbReference type="EMBL" id="BC132390">
    <property type="protein sequence ID" value="AAI32391.1"/>
    <property type="molecule type" value="mRNA"/>
</dbReference>
<dbReference type="EMBL" id="BC138042">
    <property type="protein sequence ID" value="AAI38043.1"/>
    <property type="molecule type" value="mRNA"/>
</dbReference>
<dbReference type="EMBL" id="AK173008">
    <property type="protein sequence ID" value="BAD32286.1"/>
    <property type="molecule type" value="mRNA"/>
</dbReference>
<dbReference type="CCDS" id="CCDS22951.3">
    <molecule id="Q811P8-2"/>
</dbReference>
<dbReference type="CCDS" id="CCDS57666.1">
    <molecule id="Q811P8-1"/>
</dbReference>
<dbReference type="RefSeq" id="NP_001182561.1">
    <molecule id="Q811P8-1"/>
    <property type="nucleotide sequence ID" value="NM_001195632.2"/>
</dbReference>
<dbReference type="RefSeq" id="NP_796353.3">
    <molecule id="Q811P8-2"/>
    <property type="nucleotide sequence ID" value="NM_177379.5"/>
</dbReference>
<dbReference type="SMR" id="Q811P8"/>
<dbReference type="BioGRID" id="237045">
    <property type="interactions" value="17"/>
</dbReference>
<dbReference type="FunCoup" id="Q811P8">
    <property type="interactions" value="974"/>
</dbReference>
<dbReference type="IntAct" id="Q811P8">
    <property type="interactions" value="8"/>
</dbReference>
<dbReference type="MINT" id="Q811P8"/>
<dbReference type="STRING" id="10090.ENSMUSP00000133898"/>
<dbReference type="GlyGen" id="Q811P8">
    <property type="glycosylation" value="12 sites, 3 N-linked glycans (3 sites), 1 O-linked glycan (9 sites)"/>
</dbReference>
<dbReference type="iPTMnet" id="Q811P8"/>
<dbReference type="PhosphoSitePlus" id="Q811P8"/>
<dbReference type="SwissPalm" id="Q811P8"/>
<dbReference type="jPOST" id="Q811P8"/>
<dbReference type="PaxDb" id="10090-ENSMUSP00000133898"/>
<dbReference type="ProteomicsDB" id="255209">
    <molecule id="Q811P8-1"/>
</dbReference>
<dbReference type="ProteomicsDB" id="255210">
    <molecule id="Q811P8-2"/>
</dbReference>
<dbReference type="Pumba" id="Q811P8"/>
<dbReference type="Antibodypedia" id="51352">
    <property type="antibodies" value="86 antibodies from 14 providers"/>
</dbReference>
<dbReference type="DNASU" id="330914"/>
<dbReference type="Ensembl" id="ENSMUST00000168954.9">
    <molecule id="Q811P8-2"/>
    <property type="protein sequence ID" value="ENSMUSP00000128448.3"/>
    <property type="gene ID" value="ENSMUSG00000041444.15"/>
</dbReference>
<dbReference type="Ensembl" id="ENSMUST00000174641.8">
    <molecule id="Q811P8-1"/>
    <property type="protein sequence ID" value="ENSMUSP00000133898.2"/>
    <property type="gene ID" value="ENSMUSG00000041444.15"/>
</dbReference>
<dbReference type="Ensembl" id="ENSMUST00000182802.8">
    <molecule id="Q811P8-2"/>
    <property type="protein sequence ID" value="ENSMUSP00000138145.2"/>
    <property type="gene ID" value="ENSMUSG00000041444.15"/>
</dbReference>
<dbReference type="GeneID" id="330914"/>
<dbReference type="KEGG" id="mmu:330914"/>
<dbReference type="UCSC" id="uc009orv.2">
    <molecule id="Q811P8-1"/>
    <property type="organism name" value="mouse"/>
</dbReference>
<dbReference type="AGR" id="MGI:2450166"/>
<dbReference type="CTD" id="9743"/>
<dbReference type="MGI" id="MGI:2450166">
    <property type="gene designation" value="Arhgap32"/>
</dbReference>
<dbReference type="VEuPathDB" id="HostDB:ENSMUSG00000041444"/>
<dbReference type="eggNOG" id="KOG1449">
    <property type="taxonomic scope" value="Eukaryota"/>
</dbReference>
<dbReference type="eggNOG" id="KOG3564">
    <property type="taxonomic scope" value="Eukaryota"/>
</dbReference>
<dbReference type="GeneTree" id="ENSGT00940000154313"/>
<dbReference type="HOGENOM" id="CLU_002754_0_0_1"/>
<dbReference type="InParanoid" id="Q811P8"/>
<dbReference type="OMA" id="IIQVTDC"/>
<dbReference type="OrthoDB" id="79452at2759"/>
<dbReference type="PhylomeDB" id="Q811P8"/>
<dbReference type="TreeFam" id="TF351451"/>
<dbReference type="Reactome" id="R-MMU-8980692">
    <property type="pathway name" value="RHOA GTPase cycle"/>
</dbReference>
<dbReference type="Reactome" id="R-MMU-9013026">
    <property type="pathway name" value="RHOB GTPase cycle"/>
</dbReference>
<dbReference type="Reactome" id="R-MMU-9013106">
    <property type="pathway name" value="RHOC GTPase cycle"/>
</dbReference>
<dbReference type="Reactome" id="R-MMU-9013148">
    <property type="pathway name" value="CDC42 GTPase cycle"/>
</dbReference>
<dbReference type="Reactome" id="R-MMU-9013149">
    <property type="pathway name" value="RAC1 GTPase cycle"/>
</dbReference>
<dbReference type="Reactome" id="R-MMU-9013404">
    <property type="pathway name" value="RAC2 GTPase cycle"/>
</dbReference>
<dbReference type="Reactome" id="R-MMU-9013405">
    <property type="pathway name" value="RHOD GTPase cycle"/>
</dbReference>
<dbReference type="Reactome" id="R-MMU-9013406">
    <property type="pathway name" value="RHOQ GTPase cycle"/>
</dbReference>
<dbReference type="Reactome" id="R-MMU-9013408">
    <property type="pathway name" value="RHOG GTPase cycle"/>
</dbReference>
<dbReference type="Reactome" id="R-MMU-9013409">
    <property type="pathway name" value="RHOJ GTPase cycle"/>
</dbReference>
<dbReference type="Reactome" id="R-MMU-9013423">
    <property type="pathway name" value="RAC3 GTPase cycle"/>
</dbReference>
<dbReference type="Reactome" id="R-MMU-9035034">
    <property type="pathway name" value="RHOF GTPase cycle"/>
</dbReference>
<dbReference type="BioGRID-ORCS" id="330914">
    <property type="hits" value="3 hits in 77 CRISPR screens"/>
</dbReference>
<dbReference type="CD-CODE" id="CE726F99">
    <property type="entry name" value="Postsynaptic density"/>
</dbReference>
<dbReference type="ChiTaRS" id="Arhgap32">
    <property type="organism name" value="mouse"/>
</dbReference>
<dbReference type="PRO" id="PR:Q811P8"/>
<dbReference type="Proteomes" id="UP000000589">
    <property type="component" value="Chromosome 9"/>
</dbReference>
<dbReference type="RNAct" id="Q811P8">
    <property type="molecule type" value="protein"/>
</dbReference>
<dbReference type="Bgee" id="ENSMUSG00000041444">
    <property type="expression patterns" value="Expressed in caudate-putamen and 209 other cell types or tissues"/>
</dbReference>
<dbReference type="ExpressionAtlas" id="Q811P8">
    <property type="expression patterns" value="baseline and differential"/>
</dbReference>
<dbReference type="GO" id="GO:0015629">
    <property type="term" value="C:actin cytoskeleton"/>
    <property type="evidence" value="ECO:0000314"/>
    <property type="project" value="MGI"/>
</dbReference>
<dbReference type="GO" id="GO:0005938">
    <property type="term" value="C:cell cortex"/>
    <property type="evidence" value="ECO:0000314"/>
    <property type="project" value="MGI"/>
</dbReference>
<dbReference type="GO" id="GO:0043197">
    <property type="term" value="C:dendritic spine"/>
    <property type="evidence" value="ECO:0007669"/>
    <property type="project" value="UniProtKB-SubCell"/>
</dbReference>
<dbReference type="GO" id="GO:0005789">
    <property type="term" value="C:endoplasmic reticulum membrane"/>
    <property type="evidence" value="ECO:0007669"/>
    <property type="project" value="UniProtKB-SubCell"/>
</dbReference>
<dbReference type="GO" id="GO:0010008">
    <property type="term" value="C:endosome membrane"/>
    <property type="evidence" value="ECO:0007669"/>
    <property type="project" value="UniProtKB-SubCell"/>
</dbReference>
<dbReference type="GO" id="GO:0001650">
    <property type="term" value="C:fibrillar center"/>
    <property type="evidence" value="ECO:0007669"/>
    <property type="project" value="Ensembl"/>
</dbReference>
<dbReference type="GO" id="GO:0000139">
    <property type="term" value="C:Golgi membrane"/>
    <property type="evidence" value="ECO:0007669"/>
    <property type="project" value="UniProtKB-SubCell"/>
</dbReference>
<dbReference type="GO" id="GO:0005654">
    <property type="term" value="C:nucleoplasm"/>
    <property type="evidence" value="ECO:0007669"/>
    <property type="project" value="Ensembl"/>
</dbReference>
<dbReference type="GO" id="GO:0014069">
    <property type="term" value="C:postsynaptic density"/>
    <property type="evidence" value="ECO:0000314"/>
    <property type="project" value="UniProtKB"/>
</dbReference>
<dbReference type="GO" id="GO:0005096">
    <property type="term" value="F:GTPase activator activity"/>
    <property type="evidence" value="ECO:0000266"/>
    <property type="project" value="MGI"/>
</dbReference>
<dbReference type="GO" id="GO:1901981">
    <property type="term" value="F:phosphatidylinositol phosphate binding"/>
    <property type="evidence" value="ECO:0007669"/>
    <property type="project" value="InterPro"/>
</dbReference>
<dbReference type="GO" id="GO:0007266">
    <property type="term" value="P:Rho protein signal transduction"/>
    <property type="evidence" value="ECO:0000266"/>
    <property type="project" value="MGI"/>
</dbReference>
<dbReference type="CDD" id="cd07298">
    <property type="entry name" value="PX_RICS"/>
    <property type="match status" value="1"/>
</dbReference>
<dbReference type="CDD" id="cd04384">
    <property type="entry name" value="RhoGAP_CdGAP"/>
    <property type="match status" value="1"/>
</dbReference>
<dbReference type="CDD" id="cd11835">
    <property type="entry name" value="SH3_ARHGAP32_33"/>
    <property type="match status" value="1"/>
</dbReference>
<dbReference type="FunFam" id="1.10.555.10:FF:000002">
    <property type="entry name" value="rho GTPase-activating protein 32 isoform X1"/>
    <property type="match status" value="1"/>
</dbReference>
<dbReference type="FunFam" id="3.30.1520.10:FF:000009">
    <property type="entry name" value="rho GTPase-activating protein 32 isoform X2"/>
    <property type="match status" value="1"/>
</dbReference>
<dbReference type="Gene3D" id="3.30.1520.10">
    <property type="entry name" value="Phox-like domain"/>
    <property type="match status" value="1"/>
</dbReference>
<dbReference type="Gene3D" id="1.10.555.10">
    <property type="entry name" value="Rho GTPase activation protein"/>
    <property type="match status" value="1"/>
</dbReference>
<dbReference type="Gene3D" id="2.30.30.40">
    <property type="entry name" value="SH3 Domains"/>
    <property type="match status" value="1"/>
</dbReference>
<dbReference type="InterPro" id="IPR051576">
    <property type="entry name" value="PX-Rho_GAP"/>
</dbReference>
<dbReference type="InterPro" id="IPR042139">
    <property type="entry name" value="PX_ARHGAP32"/>
</dbReference>
<dbReference type="InterPro" id="IPR036871">
    <property type="entry name" value="PX_dom_sf"/>
</dbReference>
<dbReference type="InterPro" id="IPR008936">
    <property type="entry name" value="Rho_GTPase_activation_prot"/>
</dbReference>
<dbReference type="InterPro" id="IPR000198">
    <property type="entry name" value="RhoGAP_dom"/>
</dbReference>
<dbReference type="InterPro" id="IPR036028">
    <property type="entry name" value="SH3-like_dom_sf"/>
</dbReference>
<dbReference type="InterPro" id="IPR001452">
    <property type="entry name" value="SH3_domain"/>
</dbReference>
<dbReference type="PANTHER" id="PTHR15729">
    <property type="entry name" value="CDC42 GTPASE-ACTIVATING PROTEIN"/>
    <property type="match status" value="1"/>
</dbReference>
<dbReference type="PANTHER" id="PTHR15729:SF13">
    <property type="entry name" value="RHO GTPASE-ACTIVATING PROTEIN 32"/>
    <property type="match status" value="1"/>
</dbReference>
<dbReference type="Pfam" id="PF00620">
    <property type="entry name" value="RhoGAP"/>
    <property type="match status" value="1"/>
</dbReference>
<dbReference type="Pfam" id="PF14604">
    <property type="entry name" value="SH3_9"/>
    <property type="match status" value="1"/>
</dbReference>
<dbReference type="SMART" id="SM00324">
    <property type="entry name" value="RhoGAP"/>
    <property type="match status" value="1"/>
</dbReference>
<dbReference type="SMART" id="SM00326">
    <property type="entry name" value="SH3"/>
    <property type="match status" value="1"/>
</dbReference>
<dbReference type="SUPFAM" id="SSF48350">
    <property type="entry name" value="GTPase activation domain, GAP"/>
    <property type="match status" value="1"/>
</dbReference>
<dbReference type="SUPFAM" id="SSF64268">
    <property type="entry name" value="PX domain"/>
    <property type="match status" value="1"/>
</dbReference>
<dbReference type="SUPFAM" id="SSF50044">
    <property type="entry name" value="SH3-domain"/>
    <property type="match status" value="1"/>
</dbReference>
<dbReference type="PROSITE" id="PS50238">
    <property type="entry name" value="RHOGAP"/>
    <property type="match status" value="1"/>
</dbReference>
<dbReference type="PROSITE" id="PS50002">
    <property type="entry name" value="SH3"/>
    <property type="match status" value="1"/>
</dbReference>
<keyword id="KW-0025">Alternative splicing</keyword>
<keyword id="KW-0966">Cell projection</keyword>
<keyword id="KW-0963">Cytoplasm</keyword>
<keyword id="KW-0256">Endoplasmic reticulum</keyword>
<keyword id="KW-0967">Endosome</keyword>
<keyword id="KW-0333">Golgi apparatus</keyword>
<keyword id="KW-0343">GTPase activation</keyword>
<keyword id="KW-0472">Membrane</keyword>
<keyword id="KW-0488">Methylation</keyword>
<keyword id="KW-0597">Phosphoprotein</keyword>
<keyword id="KW-1185">Reference proteome</keyword>
<keyword id="KW-0728">SH3 domain</keyword>
<keyword id="KW-0770">Synapse</keyword>
<comment type="function">
    <text evidence="6 7 8 10 11">GTPase-activating protein (GAP) promoting GTP hydrolysis on RHOA, CDC42 and RAC1 small GTPases. May be involved in the differentiation of neuronal cells during the formation of neurite extensions. Involved in NMDA receptor activity-dependent actin reorganization in dendritic spines. May mediate cross-talks between Ras- and Rho-regulated signaling pathways in cell growth regulation. Isoform 2 has higher GAP activity.</text>
</comment>
<comment type="subunit">
    <text evidence="2 7 9 10 11 12 13">Interacts with NTRK1 (via cytoplasmic domain); the interaction is independent of the phosphorylation state of NTRK1 (By similarity). Interacts with SHC3 (via SH2 domain) (By similarity). Interacts with RASA1 (via SH3 domain); the interaction is necessary for the Ras activation and cell transforming activities of ARHGAP32. Interacts with GAB1 and GAB2. Interacts with CRK and CRKL. Found in a complex with CRKL and BCAR1; upon EGF stimulation BCAR1 may be replaced by EGFR (By similarity). Interacts with NCK1 (via SH3 domain); NCK1 recruits phosphorylated BCAR1 to the complex. Isoform 2 interacts with FYN; the interaction appears to be dependent on tyrosine phosphorylation of ARHGAP32 (By similarity). Interacts with EGFR; the interaction requires EGF stimulation and is increased by SHC3. Interacts with CDC42; the interaction requires constitutively active CDC42. Interacts with CTNNB1, DLG4, CDH2 and GRIN2B (By similarity) (PubMed:12531901, PubMed:12857875, PubMed:16716191, PubMed:17272280, PubMed:17663722). Interacts with GPHN (PubMed:27609886).</text>
</comment>
<comment type="subcellular location">
    <subcellularLocation>
        <location evidence="7 13">Postsynaptic density</location>
    </subcellularLocation>
    <subcellularLocation>
        <location evidence="7">Cell projection</location>
        <location evidence="7">Dendritic spine</location>
    </subcellularLocation>
    <subcellularLocation>
        <location evidence="2">Cytoplasm</location>
        <location evidence="2">Cell cortex</location>
    </subcellularLocation>
    <subcellularLocation>
        <location evidence="12">Endosome membrane</location>
    </subcellularLocation>
    <subcellularLocation>
        <location evidence="12">Golgi apparatus membrane</location>
    </subcellularLocation>
    <subcellularLocation>
        <location evidence="12">Endoplasmic reticulum membrane</location>
    </subcellularLocation>
    <subcellularLocation>
        <location evidence="2">Membrane</location>
    </subcellularLocation>
    <text evidence="2 7">Association to membrane via PX domain (By similarity). Associated with cortical actin in undifferentiated neuroblastoma cells, but localized to dendritic spine and postsynaptic density after differentiation (PubMed:12531901). Colocalizes with EGFR at the cell membrane upon EGF treatment (By similarity). Colocalizes with GAB2 at the cell membrane (By similarity).</text>
</comment>
<comment type="alternative products">
    <event type="alternative splicing"/>
    <isoform>
        <id>Q811P8-1</id>
        <name>1</name>
        <name>PX-RICS</name>
        <sequence type="displayed"/>
    </isoform>
    <isoform>
        <id>Q811P8-2</id>
        <name>2</name>
        <sequence type="described" ref="VSP_034937"/>
    </isoform>
</comment>
<comment type="tissue specificity">
    <text evidence="6 7 8 9 10 12">Isoform 1 and isoform 2 are highly expressed in brain, specially in cortex, corpus striatum, hippocampus and thalamus. Low levels in cerebellum, colon, small intestine, and kidney.</text>
</comment>
<comment type="developmental stage">
    <text evidence="8 12">Isoform 1 is detectable by embryonic day 13, whereas isoform 2 is detected postnatally.</text>
</comment>
<comment type="domain">
    <text evidence="12">The N-terminal PX domain interacts specifically with phosphatidylinositides.</text>
</comment>
<comment type="PTM">
    <text evidence="1">Isoform 2 is phosphorylated on multiple tyrosine residues by FYN (By similarity). Phosphorylated tyrosine residues undergo dephosphorylation after stimulation of NMDA receptors. Phosphorylated in vitro by CaMK2 in the presence of calmodulin and calcium; which inhibits GAP activity.</text>
</comment>
<comment type="disruption phenotype">
    <text evidence="10">Mice are fertile but display abnormal neurite growth.</text>
</comment>
<comment type="similarity">
    <text evidence="16">Belongs to the PX domain-containing GAP family.</text>
</comment>
<name>RHG32_MOUSE</name>
<reference key="1">
    <citation type="journal article" date="2003" name="J. Biol. Chem.">
        <title>GC-GAP, a Rho family GTPase-activating protein that interacts with signaling adapters Gab1 and Gab2.</title>
        <authorList>
            <person name="Zhao C."/>
            <person name="Ma H."/>
            <person name="Bossy-Wetzel E."/>
            <person name="Lipton S.A."/>
            <person name="Zhang Z."/>
            <person name="Feng G.S."/>
        </authorList>
    </citation>
    <scope>NUCLEOTIDE SEQUENCE [MRNA] (ISOFORM 2)</scope>
    <scope>FUNCTION</scope>
    <scope>TISSUE SPECIFICITY</scope>
    <scope>DEVELOPMENTAL STAGE</scope>
    <source>
        <strain>C57BL/6J</strain>
    </source>
</reference>
<reference key="2">
    <citation type="journal article" date="2009" name="PLoS Biol.">
        <title>Lineage-specific biology revealed by a finished genome assembly of the mouse.</title>
        <authorList>
            <person name="Church D.M."/>
            <person name="Goodstadt L."/>
            <person name="Hillier L.W."/>
            <person name="Zody M.C."/>
            <person name="Goldstein S."/>
            <person name="She X."/>
            <person name="Bult C.J."/>
            <person name="Agarwala R."/>
            <person name="Cherry J.L."/>
            <person name="DiCuccio M."/>
            <person name="Hlavina W."/>
            <person name="Kapustin Y."/>
            <person name="Meric P."/>
            <person name="Maglott D."/>
            <person name="Birtle Z."/>
            <person name="Marques A.C."/>
            <person name="Graves T."/>
            <person name="Zhou S."/>
            <person name="Teague B."/>
            <person name="Potamousis K."/>
            <person name="Churas C."/>
            <person name="Place M."/>
            <person name="Herschleb J."/>
            <person name="Runnheim R."/>
            <person name="Forrest D."/>
            <person name="Amos-Landgraf J."/>
            <person name="Schwartz D.C."/>
            <person name="Cheng Z."/>
            <person name="Lindblad-Toh K."/>
            <person name="Eichler E.E."/>
            <person name="Ponting C.P."/>
        </authorList>
    </citation>
    <scope>NUCLEOTIDE SEQUENCE [LARGE SCALE GENOMIC DNA]</scope>
    <source>
        <strain>C57BL/6J</strain>
    </source>
</reference>
<reference key="3">
    <citation type="journal article" date="2004" name="Genome Res.">
        <title>The status, quality, and expansion of the NIH full-length cDNA project: the Mammalian Gene Collection (MGC).</title>
        <authorList>
            <consortium name="The MGC Project Team"/>
        </authorList>
    </citation>
    <scope>NUCLEOTIDE SEQUENCE [LARGE SCALE MRNA] (ISOFORM 2)</scope>
    <source>
        <tissue>Brain</tissue>
    </source>
</reference>
<reference key="4">
    <citation type="journal article" date="2004" name="DNA Res.">
        <title>Prediction of the coding sequences of mouse homologues of KIAA gene: IV. The complete nucleotide sequences of 500 mouse KIAA-homologous cDNAs identified by screening of terminal sequences of cDNA clones randomly sampled from size-fractionated libraries.</title>
        <authorList>
            <person name="Okazaki N."/>
            <person name="Kikuno R."/>
            <person name="Ohara R."/>
            <person name="Inamoto S."/>
            <person name="Koseki H."/>
            <person name="Hiraoka S."/>
            <person name="Saga Y."/>
            <person name="Seino S."/>
            <person name="Nishimura M."/>
            <person name="Kaisho T."/>
            <person name="Hoshino K."/>
            <person name="Kitamura H."/>
            <person name="Nagase T."/>
            <person name="Ohara O."/>
            <person name="Koga H."/>
        </authorList>
    </citation>
    <scope>NUCLEOTIDE SEQUENCE [LARGE SCALE MRNA] OF 1584-2089</scope>
    <source>
        <tissue>Fetal brain</tissue>
    </source>
</reference>
<reference key="5">
    <citation type="journal article" date="2006" name="Mol. Cell. Proteomics">
        <title>Comprehensive identification of phosphorylation sites in postsynaptic density preparations.</title>
        <authorList>
            <person name="Trinidad J.C."/>
            <person name="Specht C.G."/>
            <person name="Thalhammer A."/>
            <person name="Schoepfer R."/>
            <person name="Burlingame A.L."/>
        </authorList>
    </citation>
    <scope>IDENTIFICATION BY MASS SPECTROMETRY [LARGE SCALE ANALYSIS]</scope>
    <source>
        <tissue>Brain</tissue>
    </source>
</reference>
<reference key="6">
    <citation type="journal article" date="2007" name="Genes Cells">
        <title>PX-RICS, a novel splicing variant of RICS, is a main isoform expressed during neural development.</title>
        <authorList>
            <person name="Hayashi T."/>
            <person name="Okabe T."/>
            <person name="Nasu-Nishimura Y."/>
            <person name="Sakaue F."/>
            <person name="Ohwada S."/>
            <person name="Matsuura K."/>
            <person name="Akiyama T."/>
            <person name="Nakamura T."/>
        </authorList>
    </citation>
    <scope>ALTERNATIVE SPLICING (ISOFORMS 1 AND 2)</scope>
    <scope>INTERACTION WITH CTTNB1; GRIN2B; DLG4 AND CDH2</scope>
    <scope>SUBCELLULAR LOCATION</scope>
    <scope>TISSUE SPECIFICITY</scope>
    <scope>DEVELOPMENTAL STAGE</scope>
    <scope>DOMAIN PX</scope>
</reference>
<reference key="7">
    <citation type="journal article" date="2003" name="J. Biol. Chem.">
        <title>Characterization of a brain-specific Rho GTPase-activating protein, p200RhoGAP.</title>
        <authorList>
            <person name="Moon S.Y."/>
            <person name="Zang H."/>
            <person name="Zheng Y."/>
        </authorList>
    </citation>
    <scope>FUNCTION</scope>
    <scope>TISSUE SPECIFICITY</scope>
</reference>
<reference key="8">
    <citation type="journal article" date="2003" name="J. Biol. Chem.">
        <title>RICS, a novel GTPase-activating protein for Cdc42 and Rac1, is involved in the beta-catenin-N-cadherin and N-methyl-D-aspartate receptor signaling.</title>
        <authorList>
            <person name="Okabe T."/>
            <person name="Nakamura T."/>
            <person name="Nishimura Y.N."/>
            <person name="Kohu K."/>
            <person name="Ohwada S."/>
            <person name="Morishita Y."/>
            <person name="Akiyama T."/>
        </authorList>
    </citation>
    <scope>FUNCTION</scope>
    <scope>INTERACTION WITH CTTNB1; GRIN2B; DLG4 AND CDH2</scope>
    <scope>SUBCELLULAR LOCATION</scope>
    <scope>TISSUE SPECIFICITY</scope>
</reference>
<reference key="9">
    <citation type="journal article" date="2003" name="Mol. Biol. Cell">
        <title>p250GAP, a novel brain-enriched GTPase-activating protein for Rho family GTPases, is involved in the N-methyl-d-aspartate receptor signaling.</title>
        <authorList>
            <person name="Nakazawa T."/>
            <person name="Watabe A.M."/>
            <person name="Tezuka T."/>
            <person name="Yoshida Y."/>
            <person name="Yokoyama K."/>
            <person name="Umemori H."/>
            <person name="Inoue A."/>
            <person name="Okabe S."/>
            <person name="Manabe T."/>
            <person name="Yamamoto T."/>
        </authorList>
    </citation>
    <scope>INTERACTION WITH GRIN2B</scope>
    <scope>SUBCELLULAR LOCATION</scope>
    <scope>TISSUE SPECIFICITY</scope>
</reference>
<reference key="10">
    <citation type="journal article" date="2006" name="Genes Cells">
        <title>Role of the Rho GTPase-activating protein RICS in neurite outgrowth.</title>
        <authorList>
            <person name="Nasu-Nishimura Y."/>
            <person name="Hayashi T."/>
            <person name="Ohishi T."/>
            <person name="Okabe T."/>
            <person name="Ohwada S."/>
            <person name="Hasegawa Y."/>
            <person name="Senda T."/>
            <person name="Toyoshima C."/>
            <person name="Nakamura T."/>
            <person name="Akiyama T."/>
        </authorList>
    </citation>
    <scope>FUNCTION</scope>
    <scope>INTERACTION WITH CDC42</scope>
    <scope>TISSUE SPECIFICITY</scope>
    <scope>DISRUPTION PHENOTYPE</scope>
</reference>
<reference key="11">
    <citation type="journal article" date="2007" name="J. Biol. Chem.">
        <title>p200 RhoGAP promotes cell proliferation by mediating cross-talk between Ras and Rho signaling pathways.</title>
        <authorList>
            <person name="Shang X."/>
            <person name="Moon S.Y."/>
            <person name="Zheng Y."/>
        </authorList>
    </citation>
    <scope>FUNCTION</scope>
    <scope>INTERACTION WITH RASA1</scope>
    <scope>MUTAGENESIS OF ARG-58</scope>
</reference>
<reference key="12">
    <citation type="journal article" date="2007" name="Proc. Natl. Acad. Sci. U.S.A.">
        <title>Large-scale phosphorylation analysis of mouse liver.</title>
        <authorList>
            <person name="Villen J."/>
            <person name="Beausoleil S.A."/>
            <person name="Gerber S.A."/>
            <person name="Gygi S.P."/>
        </authorList>
    </citation>
    <scope>IDENTIFICATION BY MASS SPECTROMETRY [LARGE SCALE ANALYSIS]</scope>
    <source>
        <tissue>Liver</tissue>
    </source>
</reference>
<reference key="13">
    <citation type="journal article" date="2010" name="Cell">
        <title>A tissue-specific atlas of mouse protein phosphorylation and expression.</title>
        <authorList>
            <person name="Huttlin E.L."/>
            <person name="Jedrychowski M.P."/>
            <person name="Elias J.E."/>
            <person name="Goswami T."/>
            <person name="Rad R."/>
            <person name="Beausoleil S.A."/>
            <person name="Villen J."/>
            <person name="Haas W."/>
            <person name="Sowa M.E."/>
            <person name="Gygi S.P."/>
        </authorList>
    </citation>
    <scope>PHOSPHORYLATION [LARGE SCALE ANALYSIS] AT SER-709; SER-732; SER-738; SER-852; SER-856; SER-952 AND SER-1588</scope>
    <scope>IDENTIFICATION BY MASS SPECTROMETRY [LARGE SCALE ANALYSIS]</scope>
    <source>
        <tissue>Brain</tissue>
        <tissue>Brown adipose tissue</tissue>
        <tissue>Kidney</tissue>
        <tissue>Pancreas</tissue>
        <tissue>Testis</tissue>
    </source>
</reference>
<reference key="14">
    <citation type="journal article" date="2014" name="Mol. Cell. Proteomics">
        <title>Immunoaffinity enrichment and mass spectrometry analysis of protein methylation.</title>
        <authorList>
            <person name="Guo A."/>
            <person name="Gu H."/>
            <person name="Zhou J."/>
            <person name="Mulhern D."/>
            <person name="Wang Y."/>
            <person name="Lee K.A."/>
            <person name="Yang V."/>
            <person name="Aguiar M."/>
            <person name="Kornhauser J."/>
            <person name="Jia X."/>
            <person name="Ren J."/>
            <person name="Beausoleil S.A."/>
            <person name="Silva J.C."/>
            <person name="Vemulapalli V."/>
            <person name="Bedford M.T."/>
            <person name="Comb M.J."/>
        </authorList>
    </citation>
    <scope>METHYLATION [LARGE SCALE ANALYSIS] AT ARG-1526; ARG-1536 AND ARG-2039</scope>
    <scope>IDENTIFICATION BY MASS SPECTROMETRY [LARGE SCALE ANALYSIS]</scope>
    <source>
        <tissue>Brain</tissue>
        <tissue>Embryo</tissue>
    </source>
</reference>
<reference key="15">
    <citation type="journal article" date="2016" name="Science">
        <title>Identification of an elaborate complex mediating postsynaptic inhibition.</title>
        <authorList>
            <person name="Uezu A."/>
            <person name="Kanak D.J."/>
            <person name="Bradshaw T.W."/>
            <person name="Soderblom E.J."/>
            <person name="Catavero C.M."/>
            <person name="Burette A.C."/>
            <person name="Weinberg R.J."/>
            <person name="Soderling S.H."/>
        </authorList>
    </citation>
    <scope>SUBCELLULAR LOCATION</scope>
    <scope>INTERACTION WITH GPHN</scope>
</reference>
<sequence length="2089" mass="229719">METESETSSLGDDSVFWLDCEGVTQLTDGDEEEREESFRKMKSSIHSEEDDFVPELHRNVHPRERPDWEETLSAMARGADVPEIPGDLTLKSCGSTASTKVKHVKKLPFTKGHFPKMAECAHFHYENVEFGSIQLSLSEEQNEVMKNGCESKELVYLVQIACQGKSWIVKRSYEDFRVLDKHLHLCIYDRRFSQLTELPRSDVLKDSPESVTQMLTAYLSRLSTIAGNKINCGPALTWMEIDNKGNHLLVHEESSINTPAVGAAHVIKRYTARAPDELTLEVGDIVSVIDMPPKVLSTWWRGKHGFQVGLFPGHCVELINQKVPQSVTNSVPKPVSKKHGKLITFLRTFMKSRPTKQKLKQRGILKERVFGCDLGEHLLNSGFEVPQVLQSCTAFIERYGIVDGIYRLSGVASNIQRLRHEFDSEHVPDLTKEPYVQDIHSVGSLCKLYFRELPNPLLTYQLYEKFSDAVSAATDEERLIKIHDVIQQLPPPHYRTLEFLMRHLSLLADYCSITNMHAKNLAIVWAPNLLRSKQIESACFSGTAAFMEVRIQSVVVEFILNHVDVLFSGKISAVMQEGAASLSRPKSLLVSSPSTKLLTLEEAQARTQAQVSSPIVTENKYIEVGEGPAALQGKFHTVIEFPLERKRPQNKMKKSPVGSWRSFFNLGKSSSVSKRKLQRNESEPSEMKAMALKGGRAEGTLRSAKSEESLTSLHAVDGDSKLFRPRRPRSSSDALSASFNGDVLGNRCNSYDNLPHDNESEEEVGLLHIPALVSPHSAEDVDLSPPDIGVASLDFDPMSFQCSPPKAESECLESGASFLDSLGYTRDKLSPSKKDAEAGGSQSQTPGSTASSEPVSPVQEKLSPFFTLDLSPTDDKSSKPSSFTEKVVYAFSPKIGRKLSKSPSMNISEPISVTLPPRVSEVIGTVSNTVAQNASPTSWDKSVEERDVINRSPTQLQLGKMKAGEREAQETCEPEAQPLEQGAAEEVELPGTEERPVLSSQSKAVPSGQSQTGAVTHDPPQDPVPVSSVSLIPPPPPPKNVARMLALALAESAQQASSQTLKRPGASQAGCTSYGDTAVVPSEEKLPSSYSSLTLDKTCFQTDRPAEQFHPQINGLGNCNQPLPEAAAMGGPTQSNTTDSGEQLHQVDLIGNSLHRNHISGDPEKARSTSAPLTDSEKSDDHGSFPEDHAGKSSVSTVSFLEQDQSPLHFSCGDQPLSYLGTSVDKPHHSSELTDKSPMPSTLPRDKAHHPLSGSPEENSSTATMAYMMATPARAEPSNSEASRVLAEQPSAADFVAATLQRTHRTNRPLPPPPSQRPAEQPPVVGQVQEAPSIGLNNSHKVQGTAPAPERPPESRAMGDPAPIFLSDGTAAAQCPMGASAPQPGLPEKVRESSRAPPLHLRAESFPGHSCGFAAPVPPTRTMESKMAAALHSSAADATSSSNYHSFVPSSASVDDVMPVPLPVSQPKHASQKIAYSSFARPDVTAEPFGPENCLHFNMTPNCQFRPQSVPPHHNKLEPHQVYGARSEPPASMGPRYNTYVAPGRNMSGHHSKPCSRVEYVSSLGSSVRNPCCPEDILPYPTIRRVQSLHAPPPSMIRSVPISRTEVPPDDEPAYCPRPVYQYKPYQSSQARSDYHVTQLQPYFENGRVHYRYSPYSSSSSSYYSPEGALCDVDAYGTVQLRPLHRLSSRDFAFYNPRLQGKNVYNYAGLPPRPRANATGYFSGNDHNVVTMPPTADGKHTYTSWDLEDMEKYRMQSIRRESRARQKVKGPIMSQYDNMTPAVQEDLGGIYVIHLRSKSDPGKTGLLSVAEGKEGRHPAKAVSPEGDERFYRKHPESEFDRAHHHGGYGSTQAEKPSLPQKQSSLRNRKLHDMGCSLPEHRAHQEASHRQLCESKNGPPYPQGAGQLDYGSKGMPDTSEPSNYHNSGKYMTSGQGSLTLNHKEVRLPKDLDRPRARQPPGPEKHSRDCYKEEEHFSQSMVPPPKPERSHSLKLHHTQNLERDPSVLYQYQTHSKRQSSMTVVSQYDNLEDYHSLPQHQRGGFGGAGMGAYVPSGFVHPQSRTYATALGQGAFLPTELSLPHPDTQIHAE</sequence>
<gene>
    <name type="primary">Arhgap32</name>
    <name type="synonym">Grit</name>
    <name type="synonym">Kiaa0712</name>
    <name type="synonym">Rics</name>
</gene>
<evidence type="ECO:0000250" key="1"/>
<evidence type="ECO:0000250" key="2">
    <source>
        <dbReference type="UniProtKB" id="A7KAX9"/>
    </source>
</evidence>
<evidence type="ECO:0000255" key="3">
    <source>
        <dbReference type="PROSITE-ProRule" id="PRU00172"/>
    </source>
</evidence>
<evidence type="ECO:0000255" key="4">
    <source>
        <dbReference type="PROSITE-ProRule" id="PRU00192"/>
    </source>
</evidence>
<evidence type="ECO:0000256" key="5">
    <source>
        <dbReference type="SAM" id="MobiDB-lite"/>
    </source>
</evidence>
<evidence type="ECO:0000269" key="6">
    <source>
    </source>
</evidence>
<evidence type="ECO:0000269" key="7">
    <source>
    </source>
</evidence>
<evidence type="ECO:0000269" key="8">
    <source>
    </source>
</evidence>
<evidence type="ECO:0000269" key="9">
    <source>
    </source>
</evidence>
<evidence type="ECO:0000269" key="10">
    <source>
    </source>
</evidence>
<evidence type="ECO:0000269" key="11">
    <source>
    </source>
</evidence>
<evidence type="ECO:0000269" key="12">
    <source>
    </source>
</evidence>
<evidence type="ECO:0000269" key="13">
    <source>
    </source>
</evidence>
<evidence type="ECO:0000303" key="14">
    <source>
    </source>
</evidence>
<evidence type="ECO:0000303" key="15">
    <source>
    </source>
</evidence>
<evidence type="ECO:0000305" key="16"/>
<evidence type="ECO:0007744" key="17">
    <source>
    </source>
</evidence>
<evidence type="ECO:0007744" key="18">
    <source>
    </source>
</evidence>